<name>FBK57_ARATH</name>
<gene>
    <name type="ordered locus">At3g16880</name>
    <name type="ORF">MUH15.4</name>
</gene>
<accession>Q9LIB4</accession>
<dbReference type="EMBL" id="AP001308">
    <property type="protein sequence ID" value="BAB03076.1"/>
    <property type="molecule type" value="Genomic_DNA"/>
</dbReference>
<dbReference type="EMBL" id="CP002686">
    <property type="protein sequence ID" value="AEE75879.1"/>
    <property type="molecule type" value="Genomic_DNA"/>
</dbReference>
<dbReference type="RefSeq" id="NP_188313.1">
    <property type="nucleotide sequence ID" value="NM_112564.1"/>
</dbReference>
<dbReference type="SMR" id="Q9LIB4"/>
<dbReference type="STRING" id="3702.Q9LIB4"/>
<dbReference type="PaxDb" id="3702-AT3G16880.1"/>
<dbReference type="EnsemblPlants" id="AT3G16880.1">
    <property type="protein sequence ID" value="AT3G16880.1"/>
    <property type="gene ID" value="AT3G16880"/>
</dbReference>
<dbReference type="GeneID" id="820943"/>
<dbReference type="Gramene" id="AT3G16880.1">
    <property type="protein sequence ID" value="AT3G16880.1"/>
    <property type="gene ID" value="AT3G16880"/>
</dbReference>
<dbReference type="KEGG" id="ath:AT3G16880"/>
<dbReference type="Araport" id="AT3G16880"/>
<dbReference type="TAIR" id="AT3G16880"/>
<dbReference type="HOGENOM" id="CLU_034692_0_0_1"/>
<dbReference type="InParanoid" id="Q9LIB4"/>
<dbReference type="OMA" id="WATAFYK"/>
<dbReference type="OrthoDB" id="1041496at2759"/>
<dbReference type="PhylomeDB" id="Q9LIB4"/>
<dbReference type="PRO" id="PR:Q9LIB4"/>
<dbReference type="Proteomes" id="UP000006548">
    <property type="component" value="Chromosome 3"/>
</dbReference>
<dbReference type="ExpressionAtlas" id="Q9LIB4">
    <property type="expression patterns" value="differential"/>
</dbReference>
<dbReference type="Gene3D" id="1.20.1280.50">
    <property type="match status" value="1"/>
</dbReference>
<dbReference type="InterPro" id="IPR006527">
    <property type="entry name" value="F-box-assoc_dom_typ1"/>
</dbReference>
<dbReference type="InterPro" id="IPR017451">
    <property type="entry name" value="F-box-assoc_interact_dom"/>
</dbReference>
<dbReference type="InterPro" id="IPR036047">
    <property type="entry name" value="F-box-like_dom_sf"/>
</dbReference>
<dbReference type="InterPro" id="IPR001810">
    <property type="entry name" value="F-box_dom"/>
</dbReference>
<dbReference type="InterPro" id="IPR050796">
    <property type="entry name" value="SCF_F-box_component"/>
</dbReference>
<dbReference type="NCBIfam" id="TIGR01640">
    <property type="entry name" value="F_box_assoc_1"/>
    <property type="match status" value="1"/>
</dbReference>
<dbReference type="PANTHER" id="PTHR31672">
    <property type="entry name" value="BNACNNG10540D PROTEIN"/>
    <property type="match status" value="1"/>
</dbReference>
<dbReference type="PANTHER" id="PTHR31672:SF13">
    <property type="entry name" value="F-BOX PROTEIN CPR30-LIKE"/>
    <property type="match status" value="1"/>
</dbReference>
<dbReference type="Pfam" id="PF00646">
    <property type="entry name" value="F-box"/>
    <property type="match status" value="1"/>
</dbReference>
<dbReference type="Pfam" id="PF07734">
    <property type="entry name" value="FBA_1"/>
    <property type="match status" value="1"/>
</dbReference>
<dbReference type="SMART" id="SM00256">
    <property type="entry name" value="FBOX"/>
    <property type="match status" value="1"/>
</dbReference>
<dbReference type="SUPFAM" id="SSF81383">
    <property type="entry name" value="F-box domain"/>
    <property type="match status" value="1"/>
</dbReference>
<dbReference type="PROSITE" id="PS50181">
    <property type="entry name" value="FBOX"/>
    <property type="match status" value="1"/>
</dbReference>
<proteinExistence type="predicted"/>
<evidence type="ECO:0000255" key="1">
    <source>
        <dbReference type="PROSITE-ProRule" id="PRU00080"/>
    </source>
</evidence>
<feature type="chain" id="PRO_0000283217" description="Putative F-box/kelch-repeat protein At3g16880">
    <location>
        <begin position="1"/>
        <end position="365"/>
    </location>
</feature>
<feature type="domain" description="F-box" evidence="1">
    <location>
        <begin position="1"/>
        <end position="47"/>
    </location>
</feature>
<feature type="repeat" description="Kelch 1">
    <location>
        <begin position="98"/>
        <end position="149"/>
    </location>
</feature>
<feature type="repeat" description="Kelch 2">
    <location>
        <begin position="155"/>
        <end position="205"/>
    </location>
</feature>
<keyword id="KW-0880">Kelch repeat</keyword>
<keyword id="KW-1185">Reference proteome</keyword>
<keyword id="KW-0677">Repeat</keyword>
<sequence>MTKMSKLPNDLLEEILSRSPLYSMRAIRLTCKKWNTLAKEESFTKKQLVQTKAAKEFMVIMMMDSKFCLMNINLNKEEDVEPSIKCNGKIINPIGMCRVYHCGGLVCITKSFSNTRDVVWNPYLGQTRWIKPRSHHAYIYAIGYETKKSCRSYKILSSEHNYINIDDERVDYEIYELDSNSWRALDVNSNWATAFYKMDVSVKGNSYTYTDYRGDFLISFDFTTERFGPTLPLPFHSRCGDIVALSSVREEKLAVLLHRCNISRMEIWITNKIEPNNVSWGKLFLTVDMKPLIIDDGIFFIDEEKKVVVVFDKDKEMRNRITAYIIGENGYFRKVDLGDSESFPVRCSYVPSSVEIKQLAKGKSN</sequence>
<organism>
    <name type="scientific">Arabidopsis thaliana</name>
    <name type="common">Mouse-ear cress</name>
    <dbReference type="NCBI Taxonomy" id="3702"/>
    <lineage>
        <taxon>Eukaryota</taxon>
        <taxon>Viridiplantae</taxon>
        <taxon>Streptophyta</taxon>
        <taxon>Embryophyta</taxon>
        <taxon>Tracheophyta</taxon>
        <taxon>Spermatophyta</taxon>
        <taxon>Magnoliopsida</taxon>
        <taxon>eudicotyledons</taxon>
        <taxon>Gunneridae</taxon>
        <taxon>Pentapetalae</taxon>
        <taxon>rosids</taxon>
        <taxon>malvids</taxon>
        <taxon>Brassicales</taxon>
        <taxon>Brassicaceae</taxon>
        <taxon>Camelineae</taxon>
        <taxon>Arabidopsis</taxon>
    </lineage>
</organism>
<protein>
    <recommendedName>
        <fullName>Putative F-box/kelch-repeat protein At3g16880</fullName>
    </recommendedName>
</protein>
<reference key="1">
    <citation type="journal article" date="2000" name="DNA Res.">
        <title>Structural analysis of Arabidopsis thaliana chromosome 3. II. Sequence features of the 4,251,695 bp regions covered by 90 P1, TAC and BAC clones.</title>
        <authorList>
            <person name="Kaneko T."/>
            <person name="Katoh T."/>
            <person name="Sato S."/>
            <person name="Nakamura Y."/>
            <person name="Asamizu E."/>
            <person name="Tabata S."/>
        </authorList>
    </citation>
    <scope>NUCLEOTIDE SEQUENCE [LARGE SCALE GENOMIC DNA]</scope>
    <source>
        <strain>cv. Columbia</strain>
    </source>
</reference>
<reference key="2">
    <citation type="journal article" date="2017" name="Plant J.">
        <title>Araport11: a complete reannotation of the Arabidopsis thaliana reference genome.</title>
        <authorList>
            <person name="Cheng C.Y."/>
            <person name="Krishnakumar V."/>
            <person name="Chan A.P."/>
            <person name="Thibaud-Nissen F."/>
            <person name="Schobel S."/>
            <person name="Town C.D."/>
        </authorList>
    </citation>
    <scope>GENOME REANNOTATION</scope>
    <source>
        <strain>cv. Columbia</strain>
    </source>
</reference>